<evidence type="ECO:0000250" key="1">
    <source>
        <dbReference type="UniProtKB" id="P03901"/>
    </source>
</evidence>
<evidence type="ECO:0000250" key="2">
    <source>
        <dbReference type="UniProtKB" id="P03902"/>
    </source>
</evidence>
<evidence type="ECO:0000255" key="3"/>
<evidence type="ECO:0000305" key="4"/>
<comment type="function">
    <text evidence="1">Core subunit of the mitochondrial membrane respiratory chain NADH dehydrogenase (Complex I) which catalyzes electron transfer from NADH through the respiratory chain, using ubiquinone as an electron acceptor. Part of the enzyme membrane arm which is embedded in the lipid bilayer and involved in proton translocation.</text>
</comment>
<comment type="catalytic activity">
    <reaction evidence="1">
        <text>a ubiquinone + NADH + 5 H(+)(in) = a ubiquinol + NAD(+) + 4 H(+)(out)</text>
        <dbReference type="Rhea" id="RHEA:29091"/>
        <dbReference type="Rhea" id="RHEA-COMP:9565"/>
        <dbReference type="Rhea" id="RHEA-COMP:9566"/>
        <dbReference type="ChEBI" id="CHEBI:15378"/>
        <dbReference type="ChEBI" id="CHEBI:16389"/>
        <dbReference type="ChEBI" id="CHEBI:17976"/>
        <dbReference type="ChEBI" id="CHEBI:57540"/>
        <dbReference type="ChEBI" id="CHEBI:57945"/>
        <dbReference type="EC" id="7.1.1.2"/>
    </reaction>
    <physiologicalReaction direction="left-to-right" evidence="1">
        <dbReference type="Rhea" id="RHEA:29092"/>
    </physiologicalReaction>
</comment>
<comment type="subunit">
    <text evidence="2">Core subunit of respiratory chain NADH dehydrogenase (Complex I) which is composed of 45 different subunits.</text>
</comment>
<comment type="subcellular location">
    <subcellularLocation>
        <location evidence="2">Mitochondrion inner membrane</location>
        <topology evidence="3">Multi-pass membrane protein</topology>
    </subcellularLocation>
</comment>
<comment type="similarity">
    <text evidence="4">Belongs to the complex I subunit 4L family.</text>
</comment>
<name>NU4LM_CHATU</name>
<reference key="1">
    <citation type="journal article" date="2001" name="Mol. Biol. Evol.">
        <title>Implications for bat evolution from two new complete mitochondrial genomes.</title>
        <authorList>
            <person name="Lin Y.-H."/>
            <person name="Penny D."/>
        </authorList>
    </citation>
    <scope>NUCLEOTIDE SEQUENCE [GENOMIC DNA]</scope>
</reference>
<keyword id="KW-0249">Electron transport</keyword>
<keyword id="KW-0472">Membrane</keyword>
<keyword id="KW-0496">Mitochondrion</keyword>
<keyword id="KW-0999">Mitochondrion inner membrane</keyword>
<keyword id="KW-0520">NAD</keyword>
<keyword id="KW-0679">Respiratory chain</keyword>
<keyword id="KW-1278">Translocase</keyword>
<keyword id="KW-0812">Transmembrane</keyword>
<keyword id="KW-1133">Transmembrane helix</keyword>
<keyword id="KW-0813">Transport</keyword>
<keyword id="KW-0830">Ubiquinone</keyword>
<sequence>MSLTYLNIMLAFSTSLLGLLMYRSHLMSSLLCLEGLVLSLFVLTTLMVLTINLTLTNLLPIILLVFAACEAALGLSLLVVVSNTYGVDYVQNLNLLKC</sequence>
<gene>
    <name type="primary">MT-ND4L</name>
    <name type="synonym">MTND4L</name>
    <name type="synonym">NADH4L</name>
    <name type="synonym">ND4L</name>
</gene>
<organism>
    <name type="scientific">Chalinolobus tuberculatus</name>
    <name type="common">New Zealand long-tailed bat</name>
    <dbReference type="NCBI Taxonomy" id="143942"/>
    <lineage>
        <taxon>Eukaryota</taxon>
        <taxon>Metazoa</taxon>
        <taxon>Chordata</taxon>
        <taxon>Craniata</taxon>
        <taxon>Vertebrata</taxon>
        <taxon>Euteleostomi</taxon>
        <taxon>Mammalia</taxon>
        <taxon>Eutheria</taxon>
        <taxon>Laurasiatheria</taxon>
        <taxon>Chiroptera</taxon>
        <taxon>Yangochiroptera</taxon>
        <taxon>Vespertilionidae</taxon>
        <taxon>Chalinolobus</taxon>
    </lineage>
</organism>
<proteinExistence type="inferred from homology"/>
<geneLocation type="mitochondrion"/>
<dbReference type="EC" id="7.1.1.2"/>
<dbReference type="EMBL" id="AF321051">
    <property type="protein sequence ID" value="AAG37938.1"/>
    <property type="molecule type" value="Genomic_DNA"/>
</dbReference>
<dbReference type="RefSeq" id="NP_071692.1">
    <property type="nucleotide sequence ID" value="NC_002626.1"/>
</dbReference>
<dbReference type="SMR" id="Q9G3R5"/>
<dbReference type="GeneID" id="802305"/>
<dbReference type="CTD" id="4539"/>
<dbReference type="GO" id="GO:0005743">
    <property type="term" value="C:mitochondrial inner membrane"/>
    <property type="evidence" value="ECO:0000250"/>
    <property type="project" value="UniProtKB"/>
</dbReference>
<dbReference type="GO" id="GO:0045271">
    <property type="term" value="C:respiratory chain complex I"/>
    <property type="evidence" value="ECO:0000250"/>
    <property type="project" value="UniProtKB"/>
</dbReference>
<dbReference type="GO" id="GO:0008137">
    <property type="term" value="F:NADH dehydrogenase (ubiquinone) activity"/>
    <property type="evidence" value="ECO:0000250"/>
    <property type="project" value="UniProtKB"/>
</dbReference>
<dbReference type="GO" id="GO:0042773">
    <property type="term" value="P:ATP synthesis coupled electron transport"/>
    <property type="evidence" value="ECO:0007669"/>
    <property type="project" value="InterPro"/>
</dbReference>
<dbReference type="FunFam" id="1.10.287.3510:FF:000002">
    <property type="entry name" value="NADH-ubiquinone oxidoreductase chain 4L"/>
    <property type="match status" value="1"/>
</dbReference>
<dbReference type="Gene3D" id="1.10.287.3510">
    <property type="match status" value="1"/>
</dbReference>
<dbReference type="InterPro" id="IPR001133">
    <property type="entry name" value="NADH_UbQ_OxRdtase_chain4L/K"/>
</dbReference>
<dbReference type="InterPro" id="IPR039428">
    <property type="entry name" value="NUOK/Mnh_C1-like"/>
</dbReference>
<dbReference type="PANTHER" id="PTHR11434:SF0">
    <property type="entry name" value="NADH-UBIQUINONE OXIDOREDUCTASE CHAIN 4L"/>
    <property type="match status" value="1"/>
</dbReference>
<dbReference type="PANTHER" id="PTHR11434">
    <property type="entry name" value="NADH-UBIQUINONE OXIDOREDUCTASE SUBUNIT ND4L"/>
    <property type="match status" value="1"/>
</dbReference>
<dbReference type="Pfam" id="PF00420">
    <property type="entry name" value="Oxidored_q2"/>
    <property type="match status" value="1"/>
</dbReference>
<feature type="chain" id="PRO_0000274993" description="NADH-ubiquinone oxidoreductase chain 4L">
    <location>
        <begin position="1"/>
        <end position="98"/>
    </location>
</feature>
<feature type="transmembrane region" description="Helical" evidence="3">
    <location>
        <begin position="1"/>
        <end position="21"/>
    </location>
</feature>
<feature type="transmembrane region" description="Helical" evidence="3">
    <location>
        <begin position="31"/>
        <end position="51"/>
    </location>
</feature>
<feature type="transmembrane region" description="Helical" evidence="3">
    <location>
        <begin position="61"/>
        <end position="81"/>
    </location>
</feature>
<protein>
    <recommendedName>
        <fullName>NADH-ubiquinone oxidoreductase chain 4L</fullName>
        <ecNumber>7.1.1.2</ecNumber>
    </recommendedName>
    <alternativeName>
        <fullName>NADH dehydrogenase subunit 4L</fullName>
    </alternativeName>
</protein>
<accession>Q9G3R5</accession>